<proteinExistence type="inferred from homology"/>
<feature type="chain" id="PRO_1000061122" description="Trans-aconitate 2-methyltransferase">
    <location>
        <begin position="1"/>
        <end position="252"/>
    </location>
</feature>
<sequence length="252" mass="28872">MADWNPSLYLQYGAERTRPAAELLARIALDDVSDLLDLGCGPGNSTALLLKRWPLARITGVDNSPAMLEQARVAVPECRFIEADVRQFKPEHAVDLIYANASLQWVPDHYALLPHLISLLKLNGVLAVQMPDNVDEPSHVLMREVAYEQGYPNRAREPLPGIHAYYDILTETGCDVDIWRTTYYHKMSSHQAIIDWVSATGLRPWMQELSEHEQLKFLERYHELLVQQYPIQENGQILLAFPRLFFVARREP</sequence>
<organism>
    <name type="scientific">Enterobacter sp. (strain 638)</name>
    <dbReference type="NCBI Taxonomy" id="399742"/>
    <lineage>
        <taxon>Bacteria</taxon>
        <taxon>Pseudomonadati</taxon>
        <taxon>Pseudomonadota</taxon>
        <taxon>Gammaproteobacteria</taxon>
        <taxon>Enterobacterales</taxon>
        <taxon>Enterobacteriaceae</taxon>
        <taxon>Enterobacter</taxon>
    </lineage>
</organism>
<evidence type="ECO:0000255" key="1">
    <source>
        <dbReference type="HAMAP-Rule" id="MF_00560"/>
    </source>
</evidence>
<keyword id="KW-0963">Cytoplasm</keyword>
<keyword id="KW-0489">Methyltransferase</keyword>
<keyword id="KW-0949">S-adenosyl-L-methionine</keyword>
<keyword id="KW-0808">Transferase</keyword>
<accession>A4WAG4</accession>
<reference key="1">
    <citation type="journal article" date="2010" name="PLoS Genet.">
        <title>Genome sequence of the plant growth promoting endophytic bacterium Enterobacter sp. 638.</title>
        <authorList>
            <person name="Taghavi S."/>
            <person name="van der Lelie D."/>
            <person name="Hoffman A."/>
            <person name="Zhang Y.B."/>
            <person name="Walla M.D."/>
            <person name="Vangronsveld J."/>
            <person name="Newman L."/>
            <person name="Monchy S."/>
        </authorList>
    </citation>
    <scope>NUCLEOTIDE SEQUENCE [LARGE SCALE GENOMIC DNA]</scope>
    <source>
        <strain>638</strain>
    </source>
</reference>
<comment type="function">
    <text evidence="1">Catalyzes the S-adenosylmethionine monomethyl esterification of trans-aconitate.</text>
</comment>
<comment type="catalytic activity">
    <reaction evidence="1">
        <text>trans-aconitate + S-adenosyl-L-methionine = (E)-3-(methoxycarbonyl)pent-2-enedioate + S-adenosyl-L-homocysteine</text>
        <dbReference type="Rhea" id="RHEA:14969"/>
        <dbReference type="ChEBI" id="CHEBI:15708"/>
        <dbReference type="ChEBI" id="CHEBI:57470"/>
        <dbReference type="ChEBI" id="CHEBI:57856"/>
        <dbReference type="ChEBI" id="CHEBI:59789"/>
        <dbReference type="EC" id="2.1.1.144"/>
    </reaction>
</comment>
<comment type="subcellular location">
    <subcellularLocation>
        <location evidence="1">Cytoplasm</location>
    </subcellularLocation>
</comment>
<comment type="similarity">
    <text evidence="1">Belongs to the methyltransferase superfamily. Tam family.</text>
</comment>
<dbReference type="EC" id="2.1.1.144" evidence="1"/>
<dbReference type="EMBL" id="CP000653">
    <property type="protein sequence ID" value="ABP60694.1"/>
    <property type="molecule type" value="Genomic_DNA"/>
</dbReference>
<dbReference type="RefSeq" id="WP_012017409.1">
    <property type="nucleotide sequence ID" value="NC_009436.1"/>
</dbReference>
<dbReference type="SMR" id="A4WAG4"/>
<dbReference type="KEGG" id="ent:Ent638_2018"/>
<dbReference type="eggNOG" id="COG4106">
    <property type="taxonomic scope" value="Bacteria"/>
</dbReference>
<dbReference type="HOGENOM" id="CLU_037990_5_2_6"/>
<dbReference type="OrthoDB" id="9795085at2"/>
<dbReference type="Proteomes" id="UP000000230">
    <property type="component" value="Chromosome"/>
</dbReference>
<dbReference type="GO" id="GO:0005737">
    <property type="term" value="C:cytoplasm"/>
    <property type="evidence" value="ECO:0007669"/>
    <property type="project" value="UniProtKB-SubCell"/>
</dbReference>
<dbReference type="GO" id="GO:0030798">
    <property type="term" value="F:trans-aconitate 2-methyltransferase activity"/>
    <property type="evidence" value="ECO:0007669"/>
    <property type="project" value="UniProtKB-UniRule"/>
</dbReference>
<dbReference type="GO" id="GO:0032259">
    <property type="term" value="P:methylation"/>
    <property type="evidence" value="ECO:0007669"/>
    <property type="project" value="UniProtKB-KW"/>
</dbReference>
<dbReference type="CDD" id="cd02440">
    <property type="entry name" value="AdoMet_MTases"/>
    <property type="match status" value="1"/>
</dbReference>
<dbReference type="Gene3D" id="1.10.150.290">
    <property type="entry name" value="S-adenosyl-L-methionine-dependent methyltransferases"/>
    <property type="match status" value="1"/>
</dbReference>
<dbReference type="Gene3D" id="3.40.50.150">
    <property type="entry name" value="Vaccinia Virus protein VP39"/>
    <property type="match status" value="1"/>
</dbReference>
<dbReference type="HAMAP" id="MF_00560">
    <property type="entry name" value="Tran_acon_Me_trans"/>
    <property type="match status" value="1"/>
</dbReference>
<dbReference type="InterPro" id="IPR041698">
    <property type="entry name" value="Methyltransf_25"/>
</dbReference>
<dbReference type="InterPro" id="IPR029063">
    <property type="entry name" value="SAM-dependent_MTases_sf"/>
</dbReference>
<dbReference type="InterPro" id="IPR023506">
    <property type="entry name" value="Trans-aconitate_MeTrfase"/>
</dbReference>
<dbReference type="InterPro" id="IPR023149">
    <property type="entry name" value="Trans_acon_MeTrfase_C"/>
</dbReference>
<dbReference type="NCBIfam" id="NF002463">
    <property type="entry name" value="PRK01683.1"/>
    <property type="match status" value="1"/>
</dbReference>
<dbReference type="PANTHER" id="PTHR43861:SF1">
    <property type="entry name" value="TRANS-ACONITATE 2-METHYLTRANSFERASE"/>
    <property type="match status" value="1"/>
</dbReference>
<dbReference type="PANTHER" id="PTHR43861">
    <property type="entry name" value="TRANS-ACONITATE 2-METHYLTRANSFERASE-RELATED"/>
    <property type="match status" value="1"/>
</dbReference>
<dbReference type="Pfam" id="PF13649">
    <property type="entry name" value="Methyltransf_25"/>
    <property type="match status" value="1"/>
</dbReference>
<dbReference type="SUPFAM" id="SSF53335">
    <property type="entry name" value="S-adenosyl-L-methionine-dependent methyltransferases"/>
    <property type="match status" value="1"/>
</dbReference>
<gene>
    <name evidence="1" type="primary">tam</name>
    <name type="ordered locus">Ent638_2018</name>
</gene>
<protein>
    <recommendedName>
        <fullName evidence="1">Trans-aconitate 2-methyltransferase</fullName>
        <ecNumber evidence="1">2.1.1.144</ecNumber>
    </recommendedName>
</protein>
<name>TAM_ENT38</name>